<sequence>MEAFPVIDMEKLNGEERAPTMEKIKDACENWGFFELVNHGISHELMDTVERLTKEHYNKCMEQRFKEMVATKGLEAVQSEINDLDWESTFFLRHLPVSNISEIPDLEQDHRKAMKEFAEKLEKLAEQLLDLLCENVGLEKGYLKKAFYGSKGPTFGTKVSNYPPCPRPELIKGLRAHTDAGGIILLFQDNKVSGLQLLKDGEWIDVPPMKHSIVINIGDQLEVITNGKYKSVMHRVIAQPDGNRMSIASFYNPGSDAVMYPAPALVDKEEDQQKQVYPKFVFEDYMKLYAGLKFQAKEPRFEAMKAMENAVNLGPIATI</sequence>
<reference key="1">
    <citation type="journal article" date="1993" name="Plant Physiol.">
        <title>A cDNA sequence from kiwifruit homologous to 1-aminocyclopropane-1-carboxylic acid oxidase.</title>
        <authorList>
            <person name="Macdiarmid C.W."/>
            <person name="Gardner R.C."/>
        </authorList>
    </citation>
    <scope>NUCLEOTIDE SEQUENCE [MRNA]</scope>
    <source>
        <strain>cv. Hayward</strain>
    </source>
</reference>
<gene>
    <name type="primary">ACO</name>
</gene>
<comment type="catalytic activity">
    <reaction>
        <text>1-aminocyclopropane-1-carboxylate + L-ascorbate + O2 = ethene + L-dehydroascorbate + hydrogen cyanide + CO2 + 2 H2O</text>
        <dbReference type="Rhea" id="RHEA:23640"/>
        <dbReference type="ChEBI" id="CHEBI:15377"/>
        <dbReference type="ChEBI" id="CHEBI:15379"/>
        <dbReference type="ChEBI" id="CHEBI:16526"/>
        <dbReference type="ChEBI" id="CHEBI:18153"/>
        <dbReference type="ChEBI" id="CHEBI:18407"/>
        <dbReference type="ChEBI" id="CHEBI:38290"/>
        <dbReference type="ChEBI" id="CHEBI:58360"/>
        <dbReference type="ChEBI" id="CHEBI:58539"/>
        <dbReference type="EC" id="1.14.17.4"/>
    </reaction>
</comment>
<comment type="cofactor">
    <cofactor>
        <name>Fe cation</name>
        <dbReference type="ChEBI" id="CHEBI:24875"/>
    </cofactor>
</comment>
<comment type="pathway">
    <text>Alkene biosynthesis; ethylene biosynthesis via S-adenosyl-L-methionine; ethylene from S-adenosyl-L-methionine: step 2/2.</text>
</comment>
<comment type="developmental stage">
    <text>Expressed during fruit ripening.</text>
</comment>
<comment type="similarity">
    <text evidence="2">Belongs to the iron/ascorbate-dependent oxidoreductase family.</text>
</comment>
<dbReference type="EC" id="1.14.17.4"/>
<dbReference type="EMBL" id="M97961">
    <property type="protein sequence ID" value="AAA18566.1"/>
    <property type="molecule type" value="mRNA"/>
</dbReference>
<dbReference type="SMR" id="P31237"/>
<dbReference type="BRENDA" id="1.14.17.4">
    <property type="organism ID" value="121"/>
</dbReference>
<dbReference type="UniPathway" id="UPA00384">
    <property type="reaction ID" value="UER00563"/>
</dbReference>
<dbReference type="GO" id="GO:0009815">
    <property type="term" value="F:1-aminocyclopropane-1-carboxylate oxidase activity"/>
    <property type="evidence" value="ECO:0007669"/>
    <property type="project" value="UniProtKB-EC"/>
</dbReference>
<dbReference type="GO" id="GO:0031418">
    <property type="term" value="F:L-ascorbic acid binding"/>
    <property type="evidence" value="ECO:0007669"/>
    <property type="project" value="UniProtKB-KW"/>
</dbReference>
<dbReference type="GO" id="GO:0046872">
    <property type="term" value="F:metal ion binding"/>
    <property type="evidence" value="ECO:0007669"/>
    <property type="project" value="UniProtKB-KW"/>
</dbReference>
<dbReference type="GO" id="GO:0009693">
    <property type="term" value="P:ethylene biosynthetic process"/>
    <property type="evidence" value="ECO:0007669"/>
    <property type="project" value="UniProtKB-UniPathway"/>
</dbReference>
<dbReference type="GO" id="GO:0009835">
    <property type="term" value="P:fruit ripening"/>
    <property type="evidence" value="ECO:0007669"/>
    <property type="project" value="UniProtKB-KW"/>
</dbReference>
<dbReference type="FunFam" id="2.60.120.330:FF:000002">
    <property type="entry name" value="1-aminocyclopropane-1-carboxylate oxidase 1"/>
    <property type="match status" value="1"/>
</dbReference>
<dbReference type="Gene3D" id="2.60.120.330">
    <property type="entry name" value="B-lactam Antibiotic, Isopenicillin N Synthase, Chain"/>
    <property type="match status" value="1"/>
</dbReference>
<dbReference type="InterPro" id="IPR026992">
    <property type="entry name" value="DIOX_N"/>
</dbReference>
<dbReference type="InterPro" id="IPR044861">
    <property type="entry name" value="IPNS-like_FE2OG_OXY"/>
</dbReference>
<dbReference type="InterPro" id="IPR027443">
    <property type="entry name" value="IPNS-like_sf"/>
</dbReference>
<dbReference type="InterPro" id="IPR005123">
    <property type="entry name" value="Oxoglu/Fe-dep_dioxygenase_dom"/>
</dbReference>
<dbReference type="InterPro" id="IPR050295">
    <property type="entry name" value="Plant_2OG-oxidoreductases"/>
</dbReference>
<dbReference type="PANTHER" id="PTHR47991">
    <property type="entry name" value="OXOGLUTARATE/IRON-DEPENDENT DIOXYGENASE"/>
    <property type="match status" value="1"/>
</dbReference>
<dbReference type="Pfam" id="PF03171">
    <property type="entry name" value="2OG-FeII_Oxy"/>
    <property type="match status" value="1"/>
</dbReference>
<dbReference type="Pfam" id="PF14226">
    <property type="entry name" value="DIOX_N"/>
    <property type="match status" value="1"/>
</dbReference>
<dbReference type="SUPFAM" id="SSF51197">
    <property type="entry name" value="Clavaminate synthase-like"/>
    <property type="match status" value="1"/>
</dbReference>
<dbReference type="PROSITE" id="PS51471">
    <property type="entry name" value="FE2OG_OXY"/>
    <property type="match status" value="1"/>
</dbReference>
<name>ACCO_ACTDE</name>
<accession>P31237</accession>
<feature type="chain" id="PRO_0000067251" description="1-aminocyclopropane-1-carboxylate oxidase">
    <location>
        <begin position="1"/>
        <end position="319"/>
    </location>
</feature>
<feature type="domain" description="Fe2OG dioxygenase" evidence="1">
    <location>
        <begin position="153"/>
        <end position="253"/>
    </location>
</feature>
<feature type="binding site" evidence="1">
    <location>
        <position position="177"/>
    </location>
    <ligand>
        <name>Fe cation</name>
        <dbReference type="ChEBI" id="CHEBI:24875"/>
    </ligand>
</feature>
<feature type="binding site" evidence="1">
    <location>
        <position position="179"/>
    </location>
    <ligand>
        <name>Fe cation</name>
        <dbReference type="ChEBI" id="CHEBI:24875"/>
    </ligand>
</feature>
<feature type="binding site" evidence="1">
    <location>
        <position position="234"/>
    </location>
    <ligand>
        <name>Fe cation</name>
        <dbReference type="ChEBI" id="CHEBI:24875"/>
    </ligand>
</feature>
<keyword id="KW-0266">Ethylene biosynthesis</keyword>
<keyword id="KW-0292">Fruit ripening</keyword>
<keyword id="KW-0408">Iron</keyword>
<keyword id="KW-0479">Metal-binding</keyword>
<keyword id="KW-0560">Oxidoreductase</keyword>
<keyword id="KW-0847">Vitamin C</keyword>
<evidence type="ECO:0000255" key="1">
    <source>
        <dbReference type="PROSITE-ProRule" id="PRU00805"/>
    </source>
</evidence>
<evidence type="ECO:0000305" key="2"/>
<proteinExistence type="evidence at transcript level"/>
<protein>
    <recommendedName>
        <fullName>1-aminocyclopropane-1-carboxylate oxidase</fullName>
        <shortName>ACC oxidase</shortName>
        <ecNumber>1.14.17.4</ecNumber>
    </recommendedName>
    <alternativeName>
        <fullName>Ethylene-forming enzyme</fullName>
        <shortName>EFE</shortName>
    </alternativeName>
</protein>
<organism>
    <name type="scientific">Actinidia deliciosa</name>
    <name type="common">Kiwi</name>
    <dbReference type="NCBI Taxonomy" id="3627"/>
    <lineage>
        <taxon>Eukaryota</taxon>
        <taxon>Viridiplantae</taxon>
        <taxon>Streptophyta</taxon>
        <taxon>Embryophyta</taxon>
        <taxon>Tracheophyta</taxon>
        <taxon>Spermatophyta</taxon>
        <taxon>Magnoliopsida</taxon>
        <taxon>eudicotyledons</taxon>
        <taxon>Gunneridae</taxon>
        <taxon>Pentapetalae</taxon>
        <taxon>asterids</taxon>
        <taxon>Ericales</taxon>
        <taxon>Actinidiaceae</taxon>
        <taxon>Actinidia</taxon>
    </lineage>
</organism>